<evidence type="ECO:0000250" key="1">
    <source>
        <dbReference type="UniProtKB" id="P04551"/>
    </source>
</evidence>
<evidence type="ECO:0000250" key="2">
    <source>
        <dbReference type="UniProtKB" id="P24941"/>
    </source>
</evidence>
<evidence type="ECO:0000250" key="3">
    <source>
        <dbReference type="UniProtKB" id="P61075"/>
    </source>
</evidence>
<evidence type="ECO:0000255" key="4">
    <source>
        <dbReference type="PROSITE-ProRule" id="PRU00159"/>
    </source>
</evidence>
<evidence type="ECO:0000255" key="5">
    <source>
        <dbReference type="PROSITE-ProRule" id="PRU10027"/>
    </source>
</evidence>
<evidence type="ECO:0000303" key="6">
    <source>
    </source>
</evidence>
<evidence type="ECO:0000305" key="7"/>
<comment type="function">
    <text evidence="1 3">Serine/threonine-protein kinase (By similarity). Involved in the control of the cell cycle. Required for entry into S-phase and mitosis (By similarity). Probable component of the kinase complex that phosphorylates the repetitive C-terminus of RNA polymerase II (By similarity).</text>
</comment>
<comment type="catalytic activity">
    <reaction evidence="3">
        <text>L-seryl-[protein] + ATP = O-phospho-L-seryl-[protein] + ADP + H(+)</text>
        <dbReference type="Rhea" id="RHEA:17989"/>
        <dbReference type="Rhea" id="RHEA-COMP:9863"/>
        <dbReference type="Rhea" id="RHEA-COMP:11604"/>
        <dbReference type="ChEBI" id="CHEBI:15378"/>
        <dbReference type="ChEBI" id="CHEBI:29999"/>
        <dbReference type="ChEBI" id="CHEBI:30616"/>
        <dbReference type="ChEBI" id="CHEBI:83421"/>
        <dbReference type="ChEBI" id="CHEBI:456216"/>
        <dbReference type="EC" id="2.7.11.22"/>
    </reaction>
</comment>
<comment type="catalytic activity">
    <reaction evidence="3">
        <text>L-threonyl-[protein] + ATP = O-phospho-L-threonyl-[protein] + ADP + H(+)</text>
        <dbReference type="Rhea" id="RHEA:46608"/>
        <dbReference type="Rhea" id="RHEA-COMP:11060"/>
        <dbReference type="Rhea" id="RHEA-COMP:11605"/>
        <dbReference type="ChEBI" id="CHEBI:15378"/>
        <dbReference type="ChEBI" id="CHEBI:30013"/>
        <dbReference type="ChEBI" id="CHEBI:30616"/>
        <dbReference type="ChEBI" id="CHEBI:61977"/>
        <dbReference type="ChEBI" id="CHEBI:456216"/>
        <dbReference type="EC" id="2.7.11.22"/>
    </reaction>
</comment>
<comment type="catalytic activity">
    <reaction evidence="3">
        <text>[DNA-directed RNA polymerase] + ATP = phospho-[DNA-directed RNA polymerase] + ADP + H(+)</text>
        <dbReference type="Rhea" id="RHEA:10216"/>
        <dbReference type="Rhea" id="RHEA-COMP:11321"/>
        <dbReference type="Rhea" id="RHEA-COMP:11322"/>
        <dbReference type="ChEBI" id="CHEBI:15378"/>
        <dbReference type="ChEBI" id="CHEBI:30616"/>
        <dbReference type="ChEBI" id="CHEBI:43176"/>
        <dbReference type="ChEBI" id="CHEBI:68546"/>
        <dbReference type="ChEBI" id="CHEBI:456216"/>
        <dbReference type="EC" id="2.7.11.23"/>
    </reaction>
</comment>
<comment type="cofactor">
    <cofactor evidence="3">
        <name>Mg(2+)</name>
        <dbReference type="ChEBI" id="CHEBI:18420"/>
    </cofactor>
</comment>
<comment type="activity regulation">
    <text evidence="2">Phosphorylation at Thr-14 or Tyr-15 inactivates the enzyme, while phosphorylation at Thr-158 activates it.</text>
</comment>
<comment type="subunit">
    <text evidence="3">May form a complex composed of at least the catalytic subunit CRK2 and a cyclin.</text>
</comment>
<comment type="subcellular location">
    <subcellularLocation>
        <location evidence="1">Cytoplasm</location>
    </subcellularLocation>
</comment>
<comment type="similarity">
    <text evidence="7">Belongs to the protein kinase superfamily. CMGC Ser/Thr protein kinase family. CDC2/CDKX subfamily.</text>
</comment>
<name>CDK2H_PLAKH</name>
<organism>
    <name type="scientific">Plasmodium knowlesi (strain H)</name>
    <dbReference type="NCBI Taxonomy" id="5851"/>
    <lineage>
        <taxon>Eukaryota</taxon>
        <taxon>Sar</taxon>
        <taxon>Alveolata</taxon>
        <taxon>Apicomplexa</taxon>
        <taxon>Aconoidasida</taxon>
        <taxon>Haemosporida</taxon>
        <taxon>Plasmodiidae</taxon>
        <taxon>Plasmodium</taxon>
        <taxon>Plasmodium (Plasmodium)</taxon>
    </lineage>
</organism>
<accession>O96821</accession>
<reference key="1">
    <citation type="journal article" date="1998" name="Mol. Biochem. Parasitol.">
        <title>Characterisation of the Cdc2-related kinase 2 gene from Plasmodium knowlesi and P. berghei.</title>
        <authorList>
            <person name="Vinkenoog R."/>
            <person name="Speranca M.A."/>
            <person name="Ramesar J."/>
            <person name="Thomas A.W."/>
            <person name="del Portillo H.A."/>
            <person name="Janse C.J."/>
            <person name="Waters A.P."/>
        </authorList>
    </citation>
    <scope>NUCLEOTIDE SEQUENCE [GENOMIC DNA]</scope>
</reference>
<gene>
    <name evidence="6" type="primary">CRK2</name>
</gene>
<keyword id="KW-0067">ATP-binding</keyword>
<keyword id="KW-0131">Cell cycle</keyword>
<keyword id="KW-0132">Cell division</keyword>
<keyword id="KW-0963">Cytoplasm</keyword>
<keyword id="KW-0418">Kinase</keyword>
<keyword id="KW-0460">Magnesium</keyword>
<keyword id="KW-0479">Metal-binding</keyword>
<keyword id="KW-0498">Mitosis</keyword>
<keyword id="KW-0547">Nucleotide-binding</keyword>
<keyword id="KW-0597">Phosphoprotein</keyword>
<keyword id="KW-0723">Serine/threonine-protein kinase</keyword>
<keyword id="KW-0808">Transferase</keyword>
<feature type="chain" id="PRO_0000232670" description="Cyclin-dependent kinase 2 homolog">
    <location>
        <begin position="1"/>
        <end position="288"/>
    </location>
</feature>
<feature type="domain" description="Protein kinase" evidence="4">
    <location>
        <begin position="4"/>
        <end position="284"/>
    </location>
</feature>
<feature type="active site" description="Proton acceptor" evidence="4 5">
    <location>
        <position position="125"/>
    </location>
</feature>
<feature type="binding site" evidence="4">
    <location>
        <begin position="10"/>
        <end position="18"/>
    </location>
    <ligand>
        <name>ATP</name>
        <dbReference type="ChEBI" id="CHEBI:30616"/>
    </ligand>
</feature>
<feature type="binding site" evidence="4">
    <location>
        <position position="32"/>
    </location>
    <ligand>
        <name>ATP</name>
        <dbReference type="ChEBI" id="CHEBI:30616"/>
    </ligand>
</feature>
<feature type="modified residue" description="Phosphothreonine" evidence="2">
    <location>
        <position position="14"/>
    </location>
</feature>
<feature type="modified residue" description="Phosphotyrosine" evidence="2">
    <location>
        <position position="15"/>
    </location>
</feature>
<feature type="modified residue" description="Phosphothreonine" evidence="2">
    <location>
        <position position="158"/>
    </location>
</feature>
<dbReference type="EC" id="2.7.11.22" evidence="3"/>
<dbReference type="EC" id="2.7.11.23" evidence="3"/>
<dbReference type="EMBL" id="AJ224155">
    <property type="protein sequence ID" value="CAA11852.1"/>
    <property type="molecule type" value="Genomic_DNA"/>
</dbReference>
<dbReference type="RefSeq" id="XP_002261323.1">
    <property type="nucleotide sequence ID" value="XM_002261287.1"/>
</dbReference>
<dbReference type="SMR" id="O96821"/>
<dbReference type="KEGG" id="pkn:PKNH_1114600"/>
<dbReference type="VEuPathDB" id="PlasmoDB:PKNH_1114600"/>
<dbReference type="HOGENOM" id="CLU_000288_181_1_1"/>
<dbReference type="OMA" id="YLYQITR"/>
<dbReference type="OrthoDB" id="1732493at2759"/>
<dbReference type="PhylomeDB" id="O96821"/>
<dbReference type="GO" id="GO:0005737">
    <property type="term" value="C:cytoplasm"/>
    <property type="evidence" value="ECO:0007669"/>
    <property type="project" value="UniProtKB-SubCell"/>
</dbReference>
<dbReference type="GO" id="GO:0005634">
    <property type="term" value="C:nucleus"/>
    <property type="evidence" value="ECO:0007669"/>
    <property type="project" value="TreeGrafter"/>
</dbReference>
<dbReference type="GO" id="GO:0005524">
    <property type="term" value="F:ATP binding"/>
    <property type="evidence" value="ECO:0007669"/>
    <property type="project" value="UniProtKB-KW"/>
</dbReference>
<dbReference type="GO" id="GO:0004693">
    <property type="term" value="F:cyclin-dependent protein serine/threonine kinase activity"/>
    <property type="evidence" value="ECO:0007669"/>
    <property type="project" value="UniProtKB-EC"/>
</dbReference>
<dbReference type="GO" id="GO:0046872">
    <property type="term" value="F:metal ion binding"/>
    <property type="evidence" value="ECO:0007669"/>
    <property type="project" value="UniProtKB-KW"/>
</dbReference>
<dbReference type="GO" id="GO:0106310">
    <property type="term" value="F:protein serine kinase activity"/>
    <property type="evidence" value="ECO:0007669"/>
    <property type="project" value="RHEA"/>
</dbReference>
<dbReference type="GO" id="GO:0008353">
    <property type="term" value="F:RNA polymerase II CTD heptapeptide repeat kinase activity"/>
    <property type="evidence" value="ECO:0007669"/>
    <property type="project" value="UniProtKB-EC"/>
</dbReference>
<dbReference type="GO" id="GO:0051301">
    <property type="term" value="P:cell division"/>
    <property type="evidence" value="ECO:0007669"/>
    <property type="project" value="UniProtKB-KW"/>
</dbReference>
<dbReference type="CDD" id="cd07829">
    <property type="entry name" value="STKc_CDK_like"/>
    <property type="match status" value="1"/>
</dbReference>
<dbReference type="FunFam" id="3.30.200.20:FF:000396">
    <property type="entry name" value="Cdc2-related kinase 2, putative"/>
    <property type="match status" value="1"/>
</dbReference>
<dbReference type="FunFam" id="1.10.510.10:FF:000184">
    <property type="entry name" value="cyclin-dependent kinase 5 homolog"/>
    <property type="match status" value="1"/>
</dbReference>
<dbReference type="Gene3D" id="3.30.200.20">
    <property type="entry name" value="Phosphorylase Kinase, domain 1"/>
    <property type="match status" value="1"/>
</dbReference>
<dbReference type="Gene3D" id="1.10.510.10">
    <property type="entry name" value="Transferase(Phosphotransferase) domain 1"/>
    <property type="match status" value="1"/>
</dbReference>
<dbReference type="InterPro" id="IPR050108">
    <property type="entry name" value="CDK"/>
</dbReference>
<dbReference type="InterPro" id="IPR011009">
    <property type="entry name" value="Kinase-like_dom_sf"/>
</dbReference>
<dbReference type="InterPro" id="IPR000719">
    <property type="entry name" value="Prot_kinase_dom"/>
</dbReference>
<dbReference type="InterPro" id="IPR017441">
    <property type="entry name" value="Protein_kinase_ATP_BS"/>
</dbReference>
<dbReference type="InterPro" id="IPR008271">
    <property type="entry name" value="Ser/Thr_kinase_AS"/>
</dbReference>
<dbReference type="PANTHER" id="PTHR24056">
    <property type="entry name" value="CELL DIVISION PROTEIN KINASE"/>
    <property type="match status" value="1"/>
</dbReference>
<dbReference type="PANTHER" id="PTHR24056:SF46">
    <property type="entry name" value="CYCLIN-DEPENDENT KINASE 5"/>
    <property type="match status" value="1"/>
</dbReference>
<dbReference type="Pfam" id="PF00069">
    <property type="entry name" value="Pkinase"/>
    <property type="match status" value="1"/>
</dbReference>
<dbReference type="SMART" id="SM00220">
    <property type="entry name" value="S_TKc"/>
    <property type="match status" value="1"/>
</dbReference>
<dbReference type="SUPFAM" id="SSF56112">
    <property type="entry name" value="Protein kinase-like (PK-like)"/>
    <property type="match status" value="1"/>
</dbReference>
<dbReference type="PROSITE" id="PS00107">
    <property type="entry name" value="PROTEIN_KINASE_ATP"/>
    <property type="match status" value="1"/>
</dbReference>
<dbReference type="PROSITE" id="PS50011">
    <property type="entry name" value="PROTEIN_KINASE_DOM"/>
    <property type="match status" value="1"/>
</dbReference>
<dbReference type="PROSITE" id="PS00108">
    <property type="entry name" value="PROTEIN_KINASE_ST"/>
    <property type="match status" value="1"/>
</dbReference>
<proteinExistence type="inferred from homology"/>
<sequence length="288" mass="32946">MEKYHGLEKIGEGTYGVVYKAQNNYGETFALKKIRLEKEDEGIPSTAIREISILKELKHSNIVKLYDVIHTKKRLILVFEHLDQDLKKLLDVCDGGLESVTAKSFLLQLLSGIAYCHEHRVLHRDLKPQNLLINREGELKIADFGLARAFGIPVRKYTHEVVTLWYRAPDILMGSKKYSTPIDIWSVGCIFAEMVNGRPLFPGVSETDQLMRIFRILGTPNSANWPSVTELPKYDPDFIVYEPLPWETFLKGLDDTGIDLLSKMLRLDPNQRITAKEALQHAYFKESS</sequence>
<protein>
    <recommendedName>
        <fullName evidence="7">Cyclin-dependent kinase 2 homolog</fullName>
        <ecNumber evidence="3">2.7.11.22</ecNumber>
        <ecNumber evidence="3">2.7.11.23</ecNumber>
    </recommendedName>
    <alternativeName>
        <fullName evidence="3">Cell division control protein 2 homolog</fullName>
    </alternativeName>
    <alternativeName>
        <fullName evidence="6">cdc2-related kinase 2</fullName>
    </alternativeName>
</protein>